<gene>
    <name evidence="1" type="primary">psaB</name>
    <name type="ordered locus">PMM1523</name>
</gene>
<protein>
    <recommendedName>
        <fullName evidence="1">Photosystem I P700 chlorophyll a apoprotein A2</fullName>
        <ecNumber evidence="1">1.97.1.12</ecNumber>
    </recommendedName>
    <alternativeName>
        <fullName evidence="1">PsaB</fullName>
    </alternativeName>
</protein>
<dbReference type="EC" id="1.97.1.12" evidence="1"/>
<dbReference type="EMBL" id="AJ133191">
    <property type="protein sequence ID" value="CAB64201.1"/>
    <property type="molecule type" value="Genomic_DNA"/>
</dbReference>
<dbReference type="EMBL" id="BX548174">
    <property type="protein sequence ID" value="CAE19982.1"/>
    <property type="molecule type" value="Genomic_DNA"/>
</dbReference>
<dbReference type="RefSeq" id="WP_011133151.1">
    <property type="nucleotide sequence ID" value="NC_005072.1"/>
</dbReference>
<dbReference type="SMR" id="Q9RC07"/>
<dbReference type="STRING" id="59919.PMM1523"/>
<dbReference type="KEGG" id="pmm:PMM1523"/>
<dbReference type="eggNOG" id="COG2885">
    <property type="taxonomic scope" value="Bacteria"/>
</dbReference>
<dbReference type="HOGENOM" id="CLU_016126_1_0_3"/>
<dbReference type="OrthoDB" id="499313at2"/>
<dbReference type="Proteomes" id="UP000001026">
    <property type="component" value="Chromosome"/>
</dbReference>
<dbReference type="GO" id="GO:0009522">
    <property type="term" value="C:photosystem I"/>
    <property type="evidence" value="ECO:0007669"/>
    <property type="project" value="UniProtKB-KW"/>
</dbReference>
<dbReference type="GO" id="GO:0031676">
    <property type="term" value="C:plasma membrane-derived thylakoid membrane"/>
    <property type="evidence" value="ECO:0007669"/>
    <property type="project" value="UniProtKB-SubCell"/>
</dbReference>
<dbReference type="GO" id="GO:0051539">
    <property type="term" value="F:4 iron, 4 sulfur cluster binding"/>
    <property type="evidence" value="ECO:0007669"/>
    <property type="project" value="UniProtKB-KW"/>
</dbReference>
<dbReference type="GO" id="GO:0016168">
    <property type="term" value="F:chlorophyll binding"/>
    <property type="evidence" value="ECO:0007669"/>
    <property type="project" value="UniProtKB-KW"/>
</dbReference>
<dbReference type="GO" id="GO:0009055">
    <property type="term" value="F:electron transfer activity"/>
    <property type="evidence" value="ECO:0007669"/>
    <property type="project" value="UniProtKB-UniRule"/>
</dbReference>
<dbReference type="GO" id="GO:0000287">
    <property type="term" value="F:magnesium ion binding"/>
    <property type="evidence" value="ECO:0007669"/>
    <property type="project" value="UniProtKB-UniRule"/>
</dbReference>
<dbReference type="GO" id="GO:0016491">
    <property type="term" value="F:oxidoreductase activity"/>
    <property type="evidence" value="ECO:0007669"/>
    <property type="project" value="UniProtKB-KW"/>
</dbReference>
<dbReference type="GO" id="GO:0015979">
    <property type="term" value="P:photosynthesis"/>
    <property type="evidence" value="ECO:0007669"/>
    <property type="project" value="UniProtKB-UniRule"/>
</dbReference>
<dbReference type="FunFam" id="1.20.1130.10:FF:000001">
    <property type="entry name" value="Photosystem I P700 chlorophyll a apoprotein A2"/>
    <property type="match status" value="1"/>
</dbReference>
<dbReference type="Gene3D" id="1.20.1130.10">
    <property type="entry name" value="Photosystem I PsaA/PsaB"/>
    <property type="match status" value="1"/>
</dbReference>
<dbReference type="HAMAP" id="MF_00482">
    <property type="entry name" value="PSI_PsaB"/>
    <property type="match status" value="1"/>
</dbReference>
<dbReference type="InterPro" id="IPR001280">
    <property type="entry name" value="PSI_PsaA/B"/>
</dbReference>
<dbReference type="InterPro" id="IPR020586">
    <property type="entry name" value="PSI_PsaA/B_CS"/>
</dbReference>
<dbReference type="InterPro" id="IPR036408">
    <property type="entry name" value="PSI_PsaA/B_sf"/>
</dbReference>
<dbReference type="InterPro" id="IPR006244">
    <property type="entry name" value="PSI_PsaB"/>
</dbReference>
<dbReference type="NCBIfam" id="TIGR01336">
    <property type="entry name" value="psaB"/>
    <property type="match status" value="1"/>
</dbReference>
<dbReference type="PANTHER" id="PTHR30128">
    <property type="entry name" value="OUTER MEMBRANE PROTEIN, OMPA-RELATED"/>
    <property type="match status" value="1"/>
</dbReference>
<dbReference type="PANTHER" id="PTHR30128:SF19">
    <property type="entry name" value="PHOTOSYSTEM I P700 CHLOROPHYLL A APOPROTEIN A1-RELATED"/>
    <property type="match status" value="1"/>
</dbReference>
<dbReference type="Pfam" id="PF00223">
    <property type="entry name" value="PsaA_PsaB"/>
    <property type="match status" value="1"/>
</dbReference>
<dbReference type="PIRSF" id="PIRSF002905">
    <property type="entry name" value="PSI_A"/>
    <property type="match status" value="1"/>
</dbReference>
<dbReference type="PRINTS" id="PR00257">
    <property type="entry name" value="PHOTSYSPSAAB"/>
</dbReference>
<dbReference type="SUPFAM" id="SSF81558">
    <property type="entry name" value="Photosystem I subunits PsaA/PsaB"/>
    <property type="match status" value="1"/>
</dbReference>
<dbReference type="PROSITE" id="PS00419">
    <property type="entry name" value="PHOTOSYSTEM_I_PSAAB"/>
    <property type="match status" value="1"/>
</dbReference>
<accession>Q9RC07</accession>
<keyword id="KW-0004">4Fe-4S</keyword>
<keyword id="KW-0148">Chlorophyll</keyword>
<keyword id="KW-0157">Chromophore</keyword>
<keyword id="KW-0249">Electron transport</keyword>
<keyword id="KW-0408">Iron</keyword>
<keyword id="KW-0411">Iron-sulfur</keyword>
<keyword id="KW-0460">Magnesium</keyword>
<keyword id="KW-0472">Membrane</keyword>
<keyword id="KW-0479">Metal-binding</keyword>
<keyword id="KW-0560">Oxidoreductase</keyword>
<keyword id="KW-0602">Photosynthesis</keyword>
<keyword id="KW-0603">Photosystem I</keyword>
<keyword id="KW-0793">Thylakoid</keyword>
<keyword id="KW-0812">Transmembrane</keyword>
<keyword id="KW-1133">Transmembrane helix</keyword>
<keyword id="KW-0813">Transport</keyword>
<comment type="function">
    <text evidence="1">PsaA and PsaB bind P700, the primary electron donor of photosystem I (PSI), as well as the electron acceptors A0, A1 and FX. PSI is a plastocyanin/cytochrome c6-ferredoxin oxidoreductase, converting photonic excitation into a charge separation, which transfers an electron from the donor P700 chlorophyll pair to the spectroscopically characterized acceptors A0, A1, FX, FA and FB in turn. Oxidized P700 is reduced on the lumenal side of the thylakoid membrane by plastocyanin or cytochrome c6.</text>
</comment>
<comment type="catalytic activity">
    <reaction evidence="1">
        <text>reduced [plastocyanin] + hnu + oxidized [2Fe-2S]-[ferredoxin] = oxidized [plastocyanin] + reduced [2Fe-2S]-[ferredoxin]</text>
        <dbReference type="Rhea" id="RHEA:30407"/>
        <dbReference type="Rhea" id="RHEA-COMP:10000"/>
        <dbReference type="Rhea" id="RHEA-COMP:10001"/>
        <dbReference type="Rhea" id="RHEA-COMP:10039"/>
        <dbReference type="Rhea" id="RHEA-COMP:10040"/>
        <dbReference type="ChEBI" id="CHEBI:29036"/>
        <dbReference type="ChEBI" id="CHEBI:30212"/>
        <dbReference type="ChEBI" id="CHEBI:33737"/>
        <dbReference type="ChEBI" id="CHEBI:33738"/>
        <dbReference type="ChEBI" id="CHEBI:49552"/>
        <dbReference type="EC" id="1.97.1.12"/>
    </reaction>
</comment>
<comment type="cofactor">
    <text evidence="1">PSI electron transfer chain: 5 divinyl chlorophyll a, 1 divinyl chlorophyll a', 2 phylloquinones and 3 4Fe-4S clusters. PSI core antenna: 90 divinyl chlorophyll a, 22 carotenoids, 3 phospholipids and 1 galactolipid. P700 is a divinyl chlorophyll a/divinyl chlorophyll a' dimer, A0 is one or more divinyl chlorophyll a, A1 is one or both phylloquinones and FX is a shared 4Fe-4S iron-sulfur center.</text>
</comment>
<comment type="subunit">
    <text evidence="1">The PsaA/B heterodimer binds the P700 divinyl chlorophyll special pair and subsequent electron acceptors. PSI consists of a core antenna complex that captures photons, and an electron transfer chain that converts photonic excitation into a charge separation. The cyanobacterial PSI reaction center is composed of one copy each of PsaA,B,C,D,E,F,I,J,K,L,M and X, and forms trimeric complexes.</text>
</comment>
<comment type="subcellular location">
    <subcellularLocation>
        <location evidence="1">Cellular thylakoid membrane</location>
        <topology evidence="1">Multi-pass membrane protein</topology>
    </subcellularLocation>
</comment>
<comment type="similarity">
    <text evidence="1">Belongs to the PsaA/PsaB family.</text>
</comment>
<proteinExistence type="inferred from homology"/>
<feature type="chain" id="PRO_0000088649" description="Photosystem I P700 chlorophyll a apoprotein A2">
    <location>
        <begin position="1"/>
        <end position="742"/>
    </location>
</feature>
<feature type="transmembrane region" description="Helical; Name=I" evidence="1">
    <location>
        <begin position="46"/>
        <end position="69"/>
    </location>
</feature>
<feature type="transmembrane region" description="Helical; Name=II" evidence="1">
    <location>
        <begin position="135"/>
        <end position="158"/>
    </location>
</feature>
<feature type="transmembrane region" description="Helical; Name=III" evidence="1">
    <location>
        <begin position="175"/>
        <end position="199"/>
    </location>
</feature>
<feature type="transmembrane region" description="Helical; Name=IV" evidence="1">
    <location>
        <begin position="273"/>
        <end position="291"/>
    </location>
</feature>
<feature type="transmembrane region" description="Helical; Name=V" evidence="1">
    <location>
        <begin position="336"/>
        <end position="359"/>
    </location>
</feature>
<feature type="transmembrane region" description="Helical; Name=VI" evidence="1">
    <location>
        <begin position="375"/>
        <end position="401"/>
    </location>
</feature>
<feature type="transmembrane region" description="Helical; Name=VII" evidence="1">
    <location>
        <begin position="423"/>
        <end position="445"/>
    </location>
</feature>
<feature type="transmembrane region" description="Helical; Name=VIII" evidence="1">
    <location>
        <begin position="525"/>
        <end position="543"/>
    </location>
</feature>
<feature type="transmembrane region" description="Helical; Name=IX" evidence="1">
    <location>
        <begin position="583"/>
        <end position="604"/>
    </location>
</feature>
<feature type="transmembrane region" description="Helical; Name=X" evidence="1">
    <location>
        <begin position="651"/>
        <end position="673"/>
    </location>
</feature>
<feature type="transmembrane region" description="Helical; Name=XI" evidence="1">
    <location>
        <begin position="715"/>
        <end position="735"/>
    </location>
</feature>
<feature type="binding site" evidence="1">
    <location>
        <position position="567"/>
    </location>
    <ligand>
        <name>[4Fe-4S] cluster</name>
        <dbReference type="ChEBI" id="CHEBI:49883"/>
        <note>ligand shared between dimeric partners</note>
    </ligand>
</feature>
<feature type="binding site" evidence="1">
    <location>
        <position position="576"/>
    </location>
    <ligand>
        <name>[4Fe-4S] cluster</name>
        <dbReference type="ChEBI" id="CHEBI:49883"/>
        <note>ligand shared between dimeric partners</note>
    </ligand>
</feature>
<feature type="binding site" description="axial binding residue" evidence="1">
    <location>
        <position position="662"/>
    </location>
    <ligand>
        <name>divinyl chlorophyll a</name>
        <dbReference type="ChEBI" id="CHEBI:73095"/>
        <label>B1</label>
    </ligand>
    <ligandPart>
        <name>Mg</name>
        <dbReference type="ChEBI" id="CHEBI:25107"/>
    </ligandPart>
</feature>
<feature type="binding site" description="axial binding residue" evidence="1">
    <location>
        <position position="670"/>
    </location>
    <ligand>
        <name>divinyl chlorophyll a</name>
        <dbReference type="ChEBI" id="CHEBI:73095"/>
        <label>B3</label>
    </ligand>
    <ligandPart>
        <name>Mg</name>
        <dbReference type="ChEBI" id="CHEBI:25107"/>
    </ligandPart>
</feature>
<feature type="binding site" evidence="1">
    <location>
        <position position="678"/>
    </location>
    <ligand>
        <name>divinyl chlorophyll a</name>
        <dbReference type="ChEBI" id="CHEBI:73095"/>
        <label>B3</label>
    </ligand>
</feature>
<feature type="binding site" evidence="1">
    <location>
        <position position="679"/>
    </location>
    <ligand>
        <name>phylloquinone</name>
        <dbReference type="ChEBI" id="CHEBI:18067"/>
        <label>B</label>
    </ligand>
</feature>
<name>PSAB_PROMP</name>
<evidence type="ECO:0000255" key="1">
    <source>
        <dbReference type="HAMAP-Rule" id="MF_00482"/>
    </source>
</evidence>
<organism>
    <name type="scientific">Prochlorococcus marinus subsp. pastoris (strain CCMP1986 / NIES-2087 / MED4)</name>
    <dbReference type="NCBI Taxonomy" id="59919"/>
    <lineage>
        <taxon>Bacteria</taxon>
        <taxon>Bacillati</taxon>
        <taxon>Cyanobacteriota</taxon>
        <taxon>Cyanophyceae</taxon>
        <taxon>Synechococcales</taxon>
        <taxon>Prochlorococcaceae</taxon>
        <taxon>Prochlorococcus</taxon>
    </lineage>
</organism>
<sequence length="742" mass="82743">MATKFPSFNQGLAQDPTTRRIWYGIATAHDFESHDGMTEEKLYQKLFSTHFGHLAIIALWVAGNLFHIAWQGNFEQFVLDPTHVRPIAHAIWDPHFGSGITEAMTQAGASGPVNIAYSGLYHWWYTIGMRTNEQLFQASIFMSILACWTLFAGWLHLQPKFRPSLAWFKNNESRLNHHLAVLFGFSSIAWTGHLVHVAIPESRGIHVGWDNWLTVLPHPAGLAPFFTLNWGAYAQNPDTLEQVFGTSEGAGTAIFTFLGGLHPQSEALWLTDIAHHHIAIGTVFIIAGHMYRNTFGIGHSLKEITEAHNTRHPLDPHKGSFGINHDGIYETVTNSLHFQLGLALAALGVATSLVAQHMGALPSYAFIARDYTTQSALYTHHQYIAMFLMVGAFAHGAIFFVRDYDPELNKDNVLARVLGTKEALISHLSWVTMILGFHTLGIYVHNDVVVAFGNPEKQILIEPVFAQFVQAAQGKMMYGFNALLSDPTSSASLAANSLPGNHYWMDLINRQDALSAFLPIGPADFLVHHAIALGLHTTALILIKGALDARGTKLIPDKKDLGYAFPCDGPGRGGTCDSSSWDAMYLAMFWALNLIAWVTFYWHWKHLAIWQGNVAQFNESGTYLMGWFRDYLWLNSAQLINGYNPFGVNSLSVWAWMFLFGHLVWATGFMFLISWRGYWQELIETLVWAHQRTPIANLVGWRDKPVALSIVQARLVGLAHFTIGNILTFGAFVIASTSGKFG</sequence>
<reference key="1">
    <citation type="journal article" date="2000" name="Photosyn. Res.">
        <title>Rapid evolutionary divergence of photosystem I core subunits PsaA and PsaB in the marine prokaryote Prochlorococcus.</title>
        <authorList>
            <person name="van der Staay G.W.M."/>
            <person name="Moon-van der Staay S.Y."/>
            <person name="Garczarek L."/>
            <person name="Partensky F."/>
        </authorList>
    </citation>
    <scope>NUCLEOTIDE SEQUENCE [GENOMIC DNA]</scope>
</reference>
<reference key="2">
    <citation type="journal article" date="2003" name="Nature">
        <title>Genome divergence in two Prochlorococcus ecotypes reflects oceanic niche differentiation.</title>
        <authorList>
            <person name="Rocap G."/>
            <person name="Larimer F.W."/>
            <person name="Lamerdin J.E."/>
            <person name="Malfatti S."/>
            <person name="Chain P."/>
            <person name="Ahlgren N.A."/>
            <person name="Arellano A."/>
            <person name="Coleman M."/>
            <person name="Hauser L."/>
            <person name="Hess W.R."/>
            <person name="Johnson Z.I."/>
            <person name="Land M.L."/>
            <person name="Lindell D."/>
            <person name="Post A.F."/>
            <person name="Regala W."/>
            <person name="Shah M."/>
            <person name="Shaw S.L."/>
            <person name="Steglich C."/>
            <person name="Sullivan M.B."/>
            <person name="Ting C.S."/>
            <person name="Tolonen A."/>
            <person name="Webb E.A."/>
            <person name="Zinser E.R."/>
            <person name="Chisholm S.W."/>
        </authorList>
    </citation>
    <scope>NUCLEOTIDE SEQUENCE [LARGE SCALE GENOMIC DNA]</scope>
    <source>
        <strain>CCMP1986 / NIES-2087 / MED4</strain>
    </source>
</reference>